<gene>
    <name evidence="1" type="primary">psbL</name>
    <name type="ordered locus">Synpcc7942_1175</name>
    <name type="ORF">see0054</name>
</gene>
<feature type="chain" id="PRO_0000219792" description="Photosystem II reaction center protein L">
    <location>
        <begin position="1"/>
        <end position="40"/>
    </location>
</feature>
<feature type="transmembrane region" description="Helical" evidence="1">
    <location>
        <begin position="19"/>
        <end position="39"/>
    </location>
</feature>
<proteinExistence type="inferred from homology"/>
<reference key="1">
    <citation type="submission" date="2002-06" db="EMBL/GenBank/DDBJ databases">
        <title>Synechococcus elongatus PCC7942 cosmid 7G3.</title>
        <authorList>
            <person name="Holtman C.K."/>
            <person name="Sandoval P."/>
            <person name="Chen Y."/>
            <person name="Socias T."/>
            <person name="Mohler B.J."/>
            <person name="McMurtry S."/>
            <person name="Gonzalez A."/>
            <person name="Salinas I."/>
            <person name="Golden S.S."/>
            <person name="Youderian P."/>
        </authorList>
    </citation>
    <scope>NUCLEOTIDE SEQUENCE [GENOMIC DNA]</scope>
</reference>
<reference key="2">
    <citation type="submission" date="2005-08" db="EMBL/GenBank/DDBJ databases">
        <title>Complete sequence of chromosome 1 of Synechococcus elongatus PCC 7942.</title>
        <authorList>
            <consortium name="US DOE Joint Genome Institute"/>
            <person name="Copeland A."/>
            <person name="Lucas S."/>
            <person name="Lapidus A."/>
            <person name="Barry K."/>
            <person name="Detter J.C."/>
            <person name="Glavina T."/>
            <person name="Hammon N."/>
            <person name="Israni S."/>
            <person name="Pitluck S."/>
            <person name="Schmutz J."/>
            <person name="Larimer F."/>
            <person name="Land M."/>
            <person name="Kyrpides N."/>
            <person name="Lykidis A."/>
            <person name="Golden S."/>
            <person name="Richardson P."/>
        </authorList>
    </citation>
    <scope>NUCLEOTIDE SEQUENCE [LARGE SCALE GENOMIC DNA]</scope>
    <source>
        <strain>ATCC 33912 / PCC 7942 / FACHB-805</strain>
    </source>
</reference>
<accession>Q8KPP1</accession>
<accession>Q31P14</accession>
<sequence length="40" mass="4575">MPTRSTNPNKQPVELNRTSLFLGLLLVFVLGILFSSYFFN</sequence>
<comment type="function">
    <text evidence="1">One of the components of the core complex of photosystem II (PSII). PSII is a light-driven water:plastoquinone oxidoreductase that uses light energy to abstract electrons from H(2)O, generating O(2) and a proton gradient subsequently used for ATP formation. It consists of a core antenna complex that captures photons, and an electron transfer chain that converts photonic excitation into a charge separation. This subunit is found at the monomer-monomer interface and is required for correct PSII assembly and/or dimerization.</text>
</comment>
<comment type="subunit">
    <text evidence="1">PSII is composed of 1 copy each of membrane proteins PsbA, PsbB, PsbC, PsbD, PsbE, PsbF, PsbH, PsbI, PsbJ, PsbK, PsbL, PsbM, PsbT, PsbX, PsbY, PsbZ, Psb30/Ycf12, peripheral proteins PsbO, CyanoQ (PsbQ), PsbU, PsbV and a large number of cofactors. It forms dimeric complexes.</text>
</comment>
<comment type="subcellular location">
    <subcellularLocation>
        <location evidence="1">Cellular thylakoid membrane</location>
        <topology evidence="1">Single-pass membrane protein</topology>
    </subcellularLocation>
</comment>
<comment type="similarity">
    <text evidence="1">Belongs to the PsbL family.</text>
</comment>
<keyword id="KW-0472">Membrane</keyword>
<keyword id="KW-0602">Photosynthesis</keyword>
<keyword id="KW-0604">Photosystem II</keyword>
<keyword id="KW-0674">Reaction center</keyword>
<keyword id="KW-1185">Reference proteome</keyword>
<keyword id="KW-0793">Thylakoid</keyword>
<keyword id="KW-0812">Transmembrane</keyword>
<keyword id="KW-1133">Transmembrane helix</keyword>
<organism>
    <name type="scientific">Synechococcus elongatus (strain ATCC 33912 / PCC 7942 / FACHB-805)</name>
    <name type="common">Anacystis nidulans R2</name>
    <dbReference type="NCBI Taxonomy" id="1140"/>
    <lineage>
        <taxon>Bacteria</taxon>
        <taxon>Bacillati</taxon>
        <taxon>Cyanobacteriota</taxon>
        <taxon>Cyanophyceae</taxon>
        <taxon>Synechococcales</taxon>
        <taxon>Synechococcaceae</taxon>
        <taxon>Synechococcus</taxon>
    </lineage>
</organism>
<dbReference type="EMBL" id="AY120853">
    <property type="protein sequence ID" value="AAM82729.1"/>
    <property type="molecule type" value="Genomic_DNA"/>
</dbReference>
<dbReference type="EMBL" id="CP000100">
    <property type="protein sequence ID" value="ABB57205.1"/>
    <property type="molecule type" value="Genomic_DNA"/>
</dbReference>
<dbReference type="RefSeq" id="WP_011377901.1">
    <property type="nucleotide sequence ID" value="NZ_JACJTX010000003.1"/>
</dbReference>
<dbReference type="SMR" id="Q8KPP1"/>
<dbReference type="STRING" id="1140.Synpcc7942_1175"/>
<dbReference type="TCDB" id="3.E.2.2.1">
    <property type="family name" value="the photosynthetic reaction center (prc) family"/>
</dbReference>
<dbReference type="PaxDb" id="1140-Synpcc7942_1175"/>
<dbReference type="KEGG" id="syf:Synpcc7942_1175"/>
<dbReference type="eggNOG" id="ENOG5033AKP">
    <property type="taxonomic scope" value="Bacteria"/>
</dbReference>
<dbReference type="HOGENOM" id="CLU_214425_0_0_3"/>
<dbReference type="BioCyc" id="MetaCyc:SYNPCC7942_1175-MONOMER"/>
<dbReference type="BioCyc" id="SYNEL:SYNPCC7942_1175-MONOMER"/>
<dbReference type="Proteomes" id="UP000889800">
    <property type="component" value="Chromosome"/>
</dbReference>
<dbReference type="GO" id="GO:0009539">
    <property type="term" value="C:photosystem II reaction center"/>
    <property type="evidence" value="ECO:0007669"/>
    <property type="project" value="InterPro"/>
</dbReference>
<dbReference type="GO" id="GO:0031676">
    <property type="term" value="C:plasma membrane-derived thylakoid membrane"/>
    <property type="evidence" value="ECO:0007669"/>
    <property type="project" value="UniProtKB-SubCell"/>
</dbReference>
<dbReference type="GO" id="GO:0015979">
    <property type="term" value="P:photosynthesis"/>
    <property type="evidence" value="ECO:0007669"/>
    <property type="project" value="UniProtKB-UniRule"/>
</dbReference>
<dbReference type="HAMAP" id="MF_01317">
    <property type="entry name" value="PSII_PsbL"/>
    <property type="match status" value="1"/>
</dbReference>
<dbReference type="InterPro" id="IPR003372">
    <property type="entry name" value="PSII_PsbL"/>
</dbReference>
<dbReference type="InterPro" id="IPR037266">
    <property type="entry name" value="PSII_PsbL_sf"/>
</dbReference>
<dbReference type="NCBIfam" id="NF001972">
    <property type="entry name" value="PRK00753.1"/>
    <property type="match status" value="1"/>
</dbReference>
<dbReference type="Pfam" id="PF02419">
    <property type="entry name" value="PsbL"/>
    <property type="match status" value="1"/>
</dbReference>
<dbReference type="SUPFAM" id="SSF161017">
    <property type="entry name" value="Photosystem II reaction center protein L, PsbL"/>
    <property type="match status" value="1"/>
</dbReference>
<name>PSBL_SYNE7</name>
<evidence type="ECO:0000255" key="1">
    <source>
        <dbReference type="HAMAP-Rule" id="MF_01317"/>
    </source>
</evidence>
<protein>
    <recommendedName>
        <fullName evidence="1">Photosystem II reaction center protein L</fullName>
        <shortName evidence="1">PSII-L</shortName>
    </recommendedName>
</protein>